<accession>Q2LTM9</accession>
<sequence>MMKRVHVYVKGKVQGVFFRAHTRKAALRFHVNGWVRNLPNGRVEAVFEGRSPEVNALIDWCRQGPSHAIVEHLDVCEETYTGEFDDFRILYDERAS</sequence>
<organism>
    <name type="scientific">Syntrophus aciditrophicus (strain SB)</name>
    <dbReference type="NCBI Taxonomy" id="56780"/>
    <lineage>
        <taxon>Bacteria</taxon>
        <taxon>Pseudomonadati</taxon>
        <taxon>Thermodesulfobacteriota</taxon>
        <taxon>Syntrophia</taxon>
        <taxon>Syntrophales</taxon>
        <taxon>Syntrophaceae</taxon>
        <taxon>Syntrophus</taxon>
    </lineage>
</organism>
<proteinExistence type="inferred from homology"/>
<protein>
    <recommendedName>
        <fullName>Acylphosphatase</fullName>
        <ecNumber>3.6.1.7</ecNumber>
    </recommendedName>
    <alternativeName>
        <fullName>Acylphosphate phosphohydrolase</fullName>
    </alternativeName>
</protein>
<feature type="chain" id="PRO_0000326829" description="Acylphosphatase">
    <location>
        <begin position="1"/>
        <end position="96"/>
    </location>
</feature>
<feature type="domain" description="Acylphosphatase-like" evidence="1">
    <location>
        <begin position="4"/>
        <end position="91"/>
    </location>
</feature>
<feature type="active site" evidence="1">
    <location>
        <position position="19"/>
    </location>
</feature>
<feature type="active site" evidence="1">
    <location>
        <position position="37"/>
    </location>
</feature>
<dbReference type="EC" id="3.6.1.7"/>
<dbReference type="EMBL" id="CP000252">
    <property type="protein sequence ID" value="ABC77443.1"/>
    <property type="molecule type" value="Genomic_DNA"/>
</dbReference>
<dbReference type="RefSeq" id="WP_011417465.1">
    <property type="nucleotide sequence ID" value="NC_007759.1"/>
</dbReference>
<dbReference type="SMR" id="Q2LTM9"/>
<dbReference type="FunCoup" id="Q2LTM9">
    <property type="interactions" value="265"/>
</dbReference>
<dbReference type="STRING" id="56780.SYN_02936"/>
<dbReference type="KEGG" id="sat:SYN_02936"/>
<dbReference type="eggNOG" id="COG1254">
    <property type="taxonomic scope" value="Bacteria"/>
</dbReference>
<dbReference type="HOGENOM" id="CLU_141932_1_0_7"/>
<dbReference type="InParanoid" id="Q2LTM9"/>
<dbReference type="OrthoDB" id="5295388at2"/>
<dbReference type="Proteomes" id="UP000001933">
    <property type="component" value="Chromosome"/>
</dbReference>
<dbReference type="GO" id="GO:0003998">
    <property type="term" value="F:acylphosphatase activity"/>
    <property type="evidence" value="ECO:0007669"/>
    <property type="project" value="UniProtKB-EC"/>
</dbReference>
<dbReference type="Gene3D" id="3.30.70.100">
    <property type="match status" value="1"/>
</dbReference>
<dbReference type="InterPro" id="IPR020456">
    <property type="entry name" value="Acylphosphatase"/>
</dbReference>
<dbReference type="InterPro" id="IPR001792">
    <property type="entry name" value="Acylphosphatase-like_dom"/>
</dbReference>
<dbReference type="InterPro" id="IPR036046">
    <property type="entry name" value="Acylphosphatase-like_dom_sf"/>
</dbReference>
<dbReference type="InterPro" id="IPR017968">
    <property type="entry name" value="Acylphosphatase_CS"/>
</dbReference>
<dbReference type="NCBIfam" id="NF011011">
    <property type="entry name" value="PRK14438.1"/>
    <property type="match status" value="1"/>
</dbReference>
<dbReference type="NCBIfam" id="NF011016">
    <property type="entry name" value="PRK14444.1"/>
    <property type="match status" value="1"/>
</dbReference>
<dbReference type="PANTHER" id="PTHR47268">
    <property type="entry name" value="ACYLPHOSPHATASE"/>
    <property type="match status" value="1"/>
</dbReference>
<dbReference type="PANTHER" id="PTHR47268:SF4">
    <property type="entry name" value="ACYLPHOSPHATASE"/>
    <property type="match status" value="1"/>
</dbReference>
<dbReference type="Pfam" id="PF00708">
    <property type="entry name" value="Acylphosphatase"/>
    <property type="match status" value="1"/>
</dbReference>
<dbReference type="SUPFAM" id="SSF54975">
    <property type="entry name" value="Acylphosphatase/BLUF domain-like"/>
    <property type="match status" value="1"/>
</dbReference>
<dbReference type="PROSITE" id="PS00150">
    <property type="entry name" value="ACYLPHOSPHATASE_1"/>
    <property type="match status" value="1"/>
</dbReference>
<dbReference type="PROSITE" id="PS00151">
    <property type="entry name" value="ACYLPHOSPHATASE_2"/>
    <property type="match status" value="1"/>
</dbReference>
<dbReference type="PROSITE" id="PS51160">
    <property type="entry name" value="ACYLPHOSPHATASE_3"/>
    <property type="match status" value="1"/>
</dbReference>
<evidence type="ECO:0000255" key="1">
    <source>
        <dbReference type="PROSITE-ProRule" id="PRU00520"/>
    </source>
</evidence>
<evidence type="ECO:0000305" key="2"/>
<name>ACYP_SYNAS</name>
<keyword id="KW-0378">Hydrolase</keyword>
<keyword id="KW-1185">Reference proteome</keyword>
<comment type="catalytic activity">
    <reaction>
        <text>an acyl phosphate + H2O = a carboxylate + phosphate + H(+)</text>
        <dbReference type="Rhea" id="RHEA:14965"/>
        <dbReference type="ChEBI" id="CHEBI:15377"/>
        <dbReference type="ChEBI" id="CHEBI:15378"/>
        <dbReference type="ChEBI" id="CHEBI:29067"/>
        <dbReference type="ChEBI" id="CHEBI:43474"/>
        <dbReference type="ChEBI" id="CHEBI:59918"/>
        <dbReference type="EC" id="3.6.1.7"/>
    </reaction>
</comment>
<comment type="similarity">
    <text evidence="2">Belongs to the acylphosphatase family.</text>
</comment>
<gene>
    <name type="primary">acyP</name>
    <name type="ordered locus">SYNAS_15640</name>
    <name type="ORF">SYN_02936</name>
</gene>
<reference key="1">
    <citation type="journal article" date="2007" name="Proc. Natl. Acad. Sci. U.S.A.">
        <title>The genome of Syntrophus aciditrophicus: life at the thermodynamic limit of microbial growth.</title>
        <authorList>
            <person name="McInerney M.J."/>
            <person name="Rohlin L."/>
            <person name="Mouttaki H."/>
            <person name="Kim U."/>
            <person name="Krupp R.S."/>
            <person name="Rios-Hernandez L."/>
            <person name="Sieber J."/>
            <person name="Struchtemeyer C.G."/>
            <person name="Bhattacharyya A."/>
            <person name="Campbell J.W."/>
            <person name="Gunsalus R.P."/>
        </authorList>
    </citation>
    <scope>NUCLEOTIDE SEQUENCE [LARGE SCALE GENOMIC DNA]</scope>
    <source>
        <strain>SB</strain>
    </source>
</reference>